<name>DDL_SHEB8</name>
<keyword id="KW-0067">ATP-binding</keyword>
<keyword id="KW-0133">Cell shape</keyword>
<keyword id="KW-0961">Cell wall biogenesis/degradation</keyword>
<keyword id="KW-0963">Cytoplasm</keyword>
<keyword id="KW-0436">Ligase</keyword>
<keyword id="KW-0460">Magnesium</keyword>
<keyword id="KW-0464">Manganese</keyword>
<keyword id="KW-0479">Metal-binding</keyword>
<keyword id="KW-0547">Nucleotide-binding</keyword>
<keyword id="KW-0573">Peptidoglycan synthesis</keyword>
<organism>
    <name type="scientific">Shewanella baltica (strain OS185)</name>
    <dbReference type="NCBI Taxonomy" id="402882"/>
    <lineage>
        <taxon>Bacteria</taxon>
        <taxon>Pseudomonadati</taxon>
        <taxon>Pseudomonadota</taxon>
        <taxon>Gammaproteobacteria</taxon>
        <taxon>Alteromonadales</taxon>
        <taxon>Shewanellaceae</taxon>
        <taxon>Shewanella</taxon>
    </lineage>
</organism>
<dbReference type="EC" id="6.3.2.4" evidence="2"/>
<dbReference type="EMBL" id="CP000753">
    <property type="protein sequence ID" value="ABS08185.1"/>
    <property type="molecule type" value="Genomic_DNA"/>
</dbReference>
<dbReference type="RefSeq" id="WP_012089113.1">
    <property type="nucleotide sequence ID" value="NC_009665.1"/>
</dbReference>
<dbReference type="SMR" id="A6WMZ6"/>
<dbReference type="KEGG" id="sbm:Shew185_2043"/>
<dbReference type="HOGENOM" id="CLU_039268_0_0_6"/>
<dbReference type="UniPathway" id="UPA00219"/>
<dbReference type="GO" id="GO:0005829">
    <property type="term" value="C:cytosol"/>
    <property type="evidence" value="ECO:0007669"/>
    <property type="project" value="TreeGrafter"/>
</dbReference>
<dbReference type="GO" id="GO:0005524">
    <property type="term" value="F:ATP binding"/>
    <property type="evidence" value="ECO:0007669"/>
    <property type="project" value="UniProtKB-KW"/>
</dbReference>
<dbReference type="GO" id="GO:0008716">
    <property type="term" value="F:D-alanine-D-alanine ligase activity"/>
    <property type="evidence" value="ECO:0007669"/>
    <property type="project" value="UniProtKB-UniRule"/>
</dbReference>
<dbReference type="GO" id="GO:0046872">
    <property type="term" value="F:metal ion binding"/>
    <property type="evidence" value="ECO:0007669"/>
    <property type="project" value="UniProtKB-KW"/>
</dbReference>
<dbReference type="GO" id="GO:0071555">
    <property type="term" value="P:cell wall organization"/>
    <property type="evidence" value="ECO:0007669"/>
    <property type="project" value="UniProtKB-KW"/>
</dbReference>
<dbReference type="GO" id="GO:0009252">
    <property type="term" value="P:peptidoglycan biosynthetic process"/>
    <property type="evidence" value="ECO:0007669"/>
    <property type="project" value="UniProtKB-UniRule"/>
</dbReference>
<dbReference type="GO" id="GO:0008360">
    <property type="term" value="P:regulation of cell shape"/>
    <property type="evidence" value="ECO:0007669"/>
    <property type="project" value="UniProtKB-KW"/>
</dbReference>
<dbReference type="FunFam" id="3.40.50.20:FF:000034">
    <property type="entry name" value="D-alanine--D-alanine ligase"/>
    <property type="match status" value="1"/>
</dbReference>
<dbReference type="Gene3D" id="3.40.50.20">
    <property type="match status" value="1"/>
</dbReference>
<dbReference type="Gene3D" id="3.30.1490.20">
    <property type="entry name" value="ATP-grasp fold, A domain"/>
    <property type="match status" value="1"/>
</dbReference>
<dbReference type="Gene3D" id="3.30.470.20">
    <property type="entry name" value="ATP-grasp fold, B domain"/>
    <property type="match status" value="1"/>
</dbReference>
<dbReference type="HAMAP" id="MF_00047">
    <property type="entry name" value="Dala_Dala_lig"/>
    <property type="match status" value="1"/>
</dbReference>
<dbReference type="InterPro" id="IPR011761">
    <property type="entry name" value="ATP-grasp"/>
</dbReference>
<dbReference type="InterPro" id="IPR013815">
    <property type="entry name" value="ATP_grasp_subdomain_1"/>
</dbReference>
<dbReference type="InterPro" id="IPR000291">
    <property type="entry name" value="D-Ala_lig_Van_CS"/>
</dbReference>
<dbReference type="InterPro" id="IPR005905">
    <property type="entry name" value="D_ala_D_ala"/>
</dbReference>
<dbReference type="InterPro" id="IPR011095">
    <property type="entry name" value="Dala_Dala_lig_C"/>
</dbReference>
<dbReference type="InterPro" id="IPR011127">
    <property type="entry name" value="Dala_Dala_lig_N"/>
</dbReference>
<dbReference type="InterPro" id="IPR016185">
    <property type="entry name" value="PreATP-grasp_dom_sf"/>
</dbReference>
<dbReference type="NCBIfam" id="TIGR01205">
    <property type="entry name" value="D_ala_D_alaTIGR"/>
    <property type="match status" value="1"/>
</dbReference>
<dbReference type="NCBIfam" id="NF002527">
    <property type="entry name" value="PRK01966.1-3"/>
    <property type="match status" value="1"/>
</dbReference>
<dbReference type="NCBIfam" id="NF002528">
    <property type="entry name" value="PRK01966.1-4"/>
    <property type="match status" value="1"/>
</dbReference>
<dbReference type="PANTHER" id="PTHR23132">
    <property type="entry name" value="D-ALANINE--D-ALANINE LIGASE"/>
    <property type="match status" value="1"/>
</dbReference>
<dbReference type="PANTHER" id="PTHR23132:SF25">
    <property type="entry name" value="D-ALANINE--D-ALANINE LIGASE A"/>
    <property type="match status" value="1"/>
</dbReference>
<dbReference type="Pfam" id="PF07478">
    <property type="entry name" value="Dala_Dala_lig_C"/>
    <property type="match status" value="1"/>
</dbReference>
<dbReference type="Pfam" id="PF01820">
    <property type="entry name" value="Dala_Dala_lig_N"/>
    <property type="match status" value="1"/>
</dbReference>
<dbReference type="PIRSF" id="PIRSF039102">
    <property type="entry name" value="Ddl/VanB"/>
    <property type="match status" value="1"/>
</dbReference>
<dbReference type="SUPFAM" id="SSF56059">
    <property type="entry name" value="Glutathione synthetase ATP-binding domain-like"/>
    <property type="match status" value="1"/>
</dbReference>
<dbReference type="SUPFAM" id="SSF52440">
    <property type="entry name" value="PreATP-grasp domain"/>
    <property type="match status" value="1"/>
</dbReference>
<dbReference type="PROSITE" id="PS50975">
    <property type="entry name" value="ATP_GRASP"/>
    <property type="match status" value="1"/>
</dbReference>
<dbReference type="PROSITE" id="PS00843">
    <property type="entry name" value="DALA_DALA_LIGASE_1"/>
    <property type="match status" value="1"/>
</dbReference>
<dbReference type="PROSITE" id="PS00844">
    <property type="entry name" value="DALA_DALA_LIGASE_2"/>
    <property type="match status" value="1"/>
</dbReference>
<protein>
    <recommendedName>
        <fullName evidence="2">D-alanine--D-alanine ligase</fullName>
        <ecNumber evidence="2">6.3.2.4</ecNumber>
    </recommendedName>
    <alternativeName>
        <fullName evidence="2">D-Ala-D-Ala ligase</fullName>
    </alternativeName>
    <alternativeName>
        <fullName evidence="2">D-alanylalanine synthetase</fullName>
    </alternativeName>
</protein>
<accession>A6WMZ6</accession>
<evidence type="ECO:0000250" key="1"/>
<evidence type="ECO:0000255" key="2">
    <source>
        <dbReference type="HAMAP-Rule" id="MF_00047"/>
    </source>
</evidence>
<feature type="chain" id="PRO_1000074784" description="D-alanine--D-alanine ligase">
    <location>
        <begin position="1"/>
        <end position="337"/>
    </location>
</feature>
<feature type="domain" description="ATP-grasp" evidence="2">
    <location>
        <begin position="124"/>
        <end position="330"/>
    </location>
</feature>
<feature type="binding site" evidence="2">
    <location>
        <begin position="154"/>
        <end position="209"/>
    </location>
    <ligand>
        <name>ATP</name>
        <dbReference type="ChEBI" id="CHEBI:30616"/>
    </ligand>
</feature>
<feature type="binding site" evidence="2">
    <location>
        <position position="284"/>
    </location>
    <ligand>
        <name>Mg(2+)</name>
        <dbReference type="ChEBI" id="CHEBI:18420"/>
        <label>1</label>
    </ligand>
</feature>
<feature type="binding site" evidence="2">
    <location>
        <position position="297"/>
    </location>
    <ligand>
        <name>Mg(2+)</name>
        <dbReference type="ChEBI" id="CHEBI:18420"/>
        <label>1</label>
    </ligand>
</feature>
<feature type="binding site" evidence="2">
    <location>
        <position position="297"/>
    </location>
    <ligand>
        <name>Mg(2+)</name>
        <dbReference type="ChEBI" id="CHEBI:18420"/>
        <label>2</label>
    </ligand>
</feature>
<feature type="binding site" evidence="2">
    <location>
        <position position="299"/>
    </location>
    <ligand>
        <name>Mg(2+)</name>
        <dbReference type="ChEBI" id="CHEBI:18420"/>
        <label>2</label>
    </ligand>
</feature>
<proteinExistence type="inferred from homology"/>
<comment type="function">
    <text evidence="2">Cell wall formation.</text>
</comment>
<comment type="catalytic activity">
    <reaction evidence="2">
        <text>2 D-alanine + ATP = D-alanyl-D-alanine + ADP + phosphate + H(+)</text>
        <dbReference type="Rhea" id="RHEA:11224"/>
        <dbReference type="ChEBI" id="CHEBI:15378"/>
        <dbReference type="ChEBI" id="CHEBI:30616"/>
        <dbReference type="ChEBI" id="CHEBI:43474"/>
        <dbReference type="ChEBI" id="CHEBI:57416"/>
        <dbReference type="ChEBI" id="CHEBI:57822"/>
        <dbReference type="ChEBI" id="CHEBI:456216"/>
        <dbReference type="EC" id="6.3.2.4"/>
    </reaction>
</comment>
<comment type="cofactor">
    <cofactor evidence="1">
        <name>Mg(2+)</name>
        <dbReference type="ChEBI" id="CHEBI:18420"/>
    </cofactor>
    <cofactor evidence="1">
        <name>Mn(2+)</name>
        <dbReference type="ChEBI" id="CHEBI:29035"/>
    </cofactor>
    <text evidence="1">Binds 2 magnesium or manganese ions per subunit.</text>
</comment>
<comment type="pathway">
    <text evidence="2">Cell wall biogenesis; peptidoglycan biosynthesis.</text>
</comment>
<comment type="subcellular location">
    <subcellularLocation>
        <location evidence="2">Cytoplasm</location>
    </subcellularLocation>
</comment>
<comment type="similarity">
    <text evidence="2">Belongs to the D-alanine--D-alanine ligase family.</text>
</comment>
<sequence>MSKINLLLLCGGGSAEHDISLMSANYFETSLAKSEQFSVLRVELDKFGQYRTAAGDDCELTNSREIRFRDESKTPWPVDYVIPCIHGYPGETGDIQSYFNLIQLPYFGCESEASSNCFNKITAKMWFSALGIPNTPYIFLNQFDDAAIEQTQAALAQWGSIFVKAASQGSSVGCYKVDDSAKVAGVLKDAFGYAPYVIVEKTIKARELEVAVYEYNGEVVATVPGEIICDTNTFYTFDEKYAKNSKARTDVVAQHVSAEISEQIRAYAIKAFKGMKLRHLSRIDFFLTADNEILLNEINTFPGSTPISMFPKMLQNHGHDFTEYLSLVINGQLTAKS</sequence>
<gene>
    <name evidence="2" type="primary">ddl</name>
    <name type="ordered locus">Shew185_2043</name>
</gene>
<reference key="1">
    <citation type="submission" date="2007-07" db="EMBL/GenBank/DDBJ databases">
        <title>Complete sequence of chromosome of Shewanella baltica OS185.</title>
        <authorList>
            <consortium name="US DOE Joint Genome Institute"/>
            <person name="Copeland A."/>
            <person name="Lucas S."/>
            <person name="Lapidus A."/>
            <person name="Barry K."/>
            <person name="Glavina del Rio T."/>
            <person name="Dalin E."/>
            <person name="Tice H."/>
            <person name="Pitluck S."/>
            <person name="Sims D."/>
            <person name="Brettin T."/>
            <person name="Bruce D."/>
            <person name="Detter J.C."/>
            <person name="Han C."/>
            <person name="Schmutz J."/>
            <person name="Larimer F."/>
            <person name="Land M."/>
            <person name="Hauser L."/>
            <person name="Kyrpides N."/>
            <person name="Mikhailova N."/>
            <person name="Brettar I."/>
            <person name="Rodrigues J."/>
            <person name="Konstantinidis K."/>
            <person name="Tiedje J."/>
            <person name="Richardson P."/>
        </authorList>
    </citation>
    <scope>NUCLEOTIDE SEQUENCE [LARGE SCALE GENOMIC DNA]</scope>
    <source>
        <strain>OS185</strain>
    </source>
</reference>